<protein>
    <recommendedName>
        <fullName>Outer membrane usher protein PsaC</fullName>
    </recommendedName>
</protein>
<proteinExistence type="inferred from homology"/>
<gene>
    <name type="primary">psaC</name>
    <name type="ordered locus">YPTB1336</name>
</gene>
<reference key="1">
    <citation type="journal article" date="1996" name="Infect. Immun.">
        <title>The psa locus is responsible for thermoinducible binding of Yersinia pseudotuberculosis to cultured cells.</title>
        <authorList>
            <person name="Yang Y."/>
            <person name="Merriam J.J."/>
            <person name="Mueller J.P."/>
            <person name="Isberg R.R."/>
        </authorList>
    </citation>
    <scope>NUCLEOTIDE SEQUENCE [GENOMIC DNA]</scope>
    <source>
        <strain>YPIII / Serotype O:3</strain>
    </source>
</reference>
<reference key="2">
    <citation type="journal article" date="2004" name="Proc. Natl. Acad. Sci. U.S.A.">
        <title>Insights into the evolution of Yersinia pestis through whole-genome comparison with Yersinia pseudotuberculosis.</title>
        <authorList>
            <person name="Chain P.S.G."/>
            <person name="Carniel E."/>
            <person name="Larimer F.W."/>
            <person name="Lamerdin J."/>
            <person name="Stoutland P.O."/>
            <person name="Regala W.M."/>
            <person name="Georgescu A.M."/>
            <person name="Vergez L.M."/>
            <person name="Land M.L."/>
            <person name="Motin V.L."/>
            <person name="Brubaker R.R."/>
            <person name="Fowler J."/>
            <person name="Hinnebusch J."/>
            <person name="Marceau M."/>
            <person name="Medigue C."/>
            <person name="Simonet M."/>
            <person name="Chenal-Francisque V."/>
            <person name="Souza B."/>
            <person name="Dacheux D."/>
            <person name="Elliott J.M."/>
            <person name="Derbise A."/>
            <person name="Hauser L.J."/>
            <person name="Garcia E."/>
        </authorList>
    </citation>
    <scope>NUCLEOTIDE SEQUENCE [LARGE SCALE GENOMIC DNA]</scope>
    <source>
        <strain>IP32953</strain>
    </source>
</reference>
<feature type="signal peptide" evidence="2">
    <location>
        <begin position="1"/>
        <end position="23"/>
    </location>
</feature>
<feature type="chain" id="PRO_0000009327" description="Outer membrane usher protein PsaC">
    <location>
        <begin position="24"/>
        <end position="837"/>
    </location>
</feature>
<feature type="sequence conflict" description="In Ref. 1; AAC37058." evidence="3" ref="1">
    <original>G</original>
    <variation>V</variation>
    <location>
        <position position="406"/>
    </location>
</feature>
<feature type="sequence conflict" description="In Ref. 1; AAC37058." evidence="3" ref="1">
    <original>G</original>
    <variation>E</variation>
    <location>
        <position position="593"/>
    </location>
</feature>
<feature type="sequence conflict" description="In Ref. 1; AAC37058." evidence="3" ref="1">
    <original>T</original>
    <variation>A</variation>
    <location>
        <position position="827"/>
    </location>
</feature>
<dbReference type="EMBL" id="L76301">
    <property type="protein sequence ID" value="AAC37058.1"/>
    <property type="status" value="ALT_INIT"/>
    <property type="molecule type" value="Genomic_DNA"/>
</dbReference>
<dbReference type="EMBL" id="BX936398">
    <property type="protein sequence ID" value="CAH20576.1"/>
    <property type="status" value="ALT_INIT"/>
    <property type="molecule type" value="Genomic_DNA"/>
</dbReference>
<dbReference type="SMR" id="Q56983"/>
<dbReference type="KEGG" id="yps:YPTB1336"/>
<dbReference type="Proteomes" id="UP000001011">
    <property type="component" value="Chromosome"/>
</dbReference>
<dbReference type="GO" id="GO:0009279">
    <property type="term" value="C:cell outer membrane"/>
    <property type="evidence" value="ECO:0007669"/>
    <property type="project" value="UniProtKB-SubCell"/>
</dbReference>
<dbReference type="GO" id="GO:0015473">
    <property type="term" value="F:fimbrial usher porin activity"/>
    <property type="evidence" value="ECO:0007669"/>
    <property type="project" value="InterPro"/>
</dbReference>
<dbReference type="GO" id="GO:0009297">
    <property type="term" value="P:pilus assembly"/>
    <property type="evidence" value="ECO:0007669"/>
    <property type="project" value="InterPro"/>
</dbReference>
<dbReference type="FunFam" id="2.60.40.2070:FF:000001">
    <property type="entry name" value="Fimbrial outer membrane usher protein"/>
    <property type="match status" value="1"/>
</dbReference>
<dbReference type="FunFam" id="3.10.20.410:FF:000001">
    <property type="entry name" value="Fimbrial outer membrane usher protein"/>
    <property type="match status" value="1"/>
</dbReference>
<dbReference type="FunFam" id="2.60.40.3110:FF:000001">
    <property type="entry name" value="Putative fimbrial outer membrane usher"/>
    <property type="match status" value="1"/>
</dbReference>
<dbReference type="Gene3D" id="2.60.40.2070">
    <property type="match status" value="1"/>
</dbReference>
<dbReference type="Gene3D" id="2.60.40.3110">
    <property type="match status" value="1"/>
</dbReference>
<dbReference type="Gene3D" id="3.10.20.410">
    <property type="match status" value="1"/>
</dbReference>
<dbReference type="Gene3D" id="2.60.40.2610">
    <property type="entry name" value="Outer membrane usher protein FimD, plug domain"/>
    <property type="match status" value="1"/>
</dbReference>
<dbReference type="InterPro" id="IPR000015">
    <property type="entry name" value="Fimb_usher"/>
</dbReference>
<dbReference type="InterPro" id="IPR018030">
    <property type="entry name" value="Fimbrial_membr_usher_CS"/>
</dbReference>
<dbReference type="InterPro" id="IPR042186">
    <property type="entry name" value="FimD_plug_dom"/>
</dbReference>
<dbReference type="InterPro" id="IPR025949">
    <property type="entry name" value="PapC-like_C"/>
</dbReference>
<dbReference type="InterPro" id="IPR043142">
    <property type="entry name" value="PapC-like_C_sf"/>
</dbReference>
<dbReference type="InterPro" id="IPR025885">
    <property type="entry name" value="PapC_N"/>
</dbReference>
<dbReference type="InterPro" id="IPR037224">
    <property type="entry name" value="PapC_N_sf"/>
</dbReference>
<dbReference type="PANTHER" id="PTHR30451:SF9">
    <property type="entry name" value="F1 CAPSULE-ANCHORING PROTEIN"/>
    <property type="match status" value="1"/>
</dbReference>
<dbReference type="PANTHER" id="PTHR30451">
    <property type="entry name" value="OUTER MEMBRANE USHER PROTEIN"/>
    <property type="match status" value="1"/>
</dbReference>
<dbReference type="Pfam" id="PF13953">
    <property type="entry name" value="PapC_C"/>
    <property type="match status" value="1"/>
</dbReference>
<dbReference type="Pfam" id="PF13954">
    <property type="entry name" value="PapC_N"/>
    <property type="match status" value="1"/>
</dbReference>
<dbReference type="Pfam" id="PF00577">
    <property type="entry name" value="Usher"/>
    <property type="match status" value="1"/>
</dbReference>
<dbReference type="SUPFAM" id="SSF141729">
    <property type="entry name" value="FimD N-terminal domain-like"/>
    <property type="match status" value="1"/>
</dbReference>
<dbReference type="PROSITE" id="PS01151">
    <property type="entry name" value="FIMBRIAL_USHER"/>
    <property type="match status" value="1"/>
</dbReference>
<organism>
    <name type="scientific">Yersinia pseudotuberculosis serotype I (strain IP32953)</name>
    <dbReference type="NCBI Taxonomy" id="273123"/>
    <lineage>
        <taxon>Bacteria</taxon>
        <taxon>Pseudomonadati</taxon>
        <taxon>Pseudomonadota</taxon>
        <taxon>Gammaproteobacteria</taxon>
        <taxon>Enterobacterales</taxon>
        <taxon>Yersiniaceae</taxon>
        <taxon>Yersinia</taxon>
    </lineage>
</organism>
<sequence>MKKLIVQFTTITLLMSTSFLVGAQRYSFDPNLLVDGNNNTDTSLFEQGNELPGTYLVDIILNGNKVDSTNVTFHSEKSPSGEPFLQSCLTKEQLSRYGVDVDAYPELSPALKNSQTNPCVNLAAIPQASEEFQFYNMQLVLSIPQAALRPEGEVPIERWDDGITAFLLNYMANISETQFRQNGGYRRSQYIQLYPGLNLGAWRVRNATNWSQSGDRGGKWQSAYTYATRGIYRLKSRVTLGESYTPGDFFDSIPFRGVMLGDDPNMQPSNQRDFIPVVRGIARSQAQVEIRQNGYLIYSTVVPPGPFELSDVIPSKSGSDLHVRVLESNGASQAFIVPYEVPAIALRKGHLRYNLVAGQYRPANADVETPPVAQATVAYGLPWNLTAFIGEQWSRHYQATSAGLGGLLGEYGALSSSITQATSQYHHQQPVKGQAWEVRYNKTLQASDTSFSLVNSQYSTNGFSTLSDVLQSYRQSGSGDNRDKIDENSRSRDLRNQISAVIGQSLGKFGYLNLNWSRQVYRGPIPAKNSLGIHYNLNVGNSFWALSWVQNANENKNDRILSLSVSIPLGGHHDTYASYRMTSSNGSNDHEIGMYGQAFDSRLSWSVRQAEHYGQPNSGHNSGSLRLGWQGSYGNIAGNYYYTPSIRQLSADVSGGAIIHRHGLTLGPQINGTSVLVEVPGVGGVTTTEDRRLKTDFRGYSIVSGLSPYQEHDIVLETADLPPDAEVAKTDTKVLPTEGAIVRASFSPQIGAKALMTITRANGQTIPFGAMASLVNQSANAAIVDEGGKAYLTGLPETGQLLVQWGKDAGQQCRVDYQLSPAEKGDTGLYMLSGVCH</sequence>
<name>PSAC_YERPS</name>
<comment type="function">
    <text>Involved in the export and assembly of PsaA (pH 6) fimbrial subunits across the outer membrane.</text>
</comment>
<comment type="subcellular location">
    <subcellularLocation>
        <location evidence="1">Cell outer membrane</location>
        <topology evidence="1">Multi-pass membrane protein</topology>
    </subcellularLocation>
</comment>
<comment type="similarity">
    <text evidence="3">Belongs to the fimbrial export usher family.</text>
</comment>
<comment type="sequence caution" evidence="3">
    <conflict type="erroneous initiation">
        <sequence resource="EMBL-CDS" id="AAC37058"/>
    </conflict>
</comment>
<comment type="sequence caution" evidence="3">
    <conflict type="erroneous initiation">
        <sequence resource="EMBL-CDS" id="CAH20576"/>
    </conflict>
</comment>
<keyword id="KW-0998">Cell outer membrane</keyword>
<keyword id="KW-1029">Fimbrium biogenesis</keyword>
<keyword id="KW-0472">Membrane</keyword>
<keyword id="KW-0732">Signal</keyword>
<keyword id="KW-0812">Transmembrane</keyword>
<keyword id="KW-1134">Transmembrane beta strand</keyword>
<keyword id="KW-0813">Transport</keyword>
<evidence type="ECO:0000250" key="1"/>
<evidence type="ECO:0000255" key="2"/>
<evidence type="ECO:0000305" key="3"/>
<accession>Q56983</accession>
<accession>Q66CR6</accession>